<keyword id="KW-0067">ATP-binding</keyword>
<keyword id="KW-0963">Cytoplasm</keyword>
<keyword id="KW-0436">Ligase</keyword>
<keyword id="KW-0547">Nucleotide-binding</keyword>
<keyword id="KW-0658">Purine biosynthesis</keyword>
<keyword id="KW-1185">Reference proteome</keyword>
<organism>
    <name type="scientific">Clostridium acetobutylicum (strain ATCC 824 / DSM 792 / JCM 1419 / IAM 19013 / LMG 5710 / NBRC 13948 / NRRL B-527 / VKM B-1787 / 2291 / W)</name>
    <dbReference type="NCBI Taxonomy" id="272562"/>
    <lineage>
        <taxon>Bacteria</taxon>
        <taxon>Bacillati</taxon>
        <taxon>Bacillota</taxon>
        <taxon>Clostridia</taxon>
        <taxon>Eubacteriales</taxon>
        <taxon>Clostridiaceae</taxon>
        <taxon>Clostridium</taxon>
    </lineage>
</organism>
<reference key="1">
    <citation type="journal article" date="2001" name="J. Bacteriol.">
        <title>Genome sequence and comparative analysis of the solvent-producing bacterium Clostridium acetobutylicum.</title>
        <authorList>
            <person name="Noelling J."/>
            <person name="Breton G."/>
            <person name="Omelchenko M.V."/>
            <person name="Makarova K.S."/>
            <person name="Zeng Q."/>
            <person name="Gibson R."/>
            <person name="Lee H.M."/>
            <person name="Dubois J."/>
            <person name="Qiu D."/>
            <person name="Hitti J."/>
            <person name="Wolf Y.I."/>
            <person name="Tatusov R.L."/>
            <person name="Sabathe F."/>
            <person name="Doucette-Stamm L.A."/>
            <person name="Soucaille P."/>
            <person name="Daly M.J."/>
            <person name="Bennett G.N."/>
            <person name="Koonin E.V."/>
            <person name="Smith D.R."/>
        </authorList>
    </citation>
    <scope>NUCLEOTIDE SEQUENCE [LARGE SCALE GENOMIC DNA]</scope>
    <source>
        <strain>ATCC 824 / DSM 792 / JCM 1419 / IAM 19013 / LMG 5710 / NBRC 13948 / NRRL B-527 / VKM B-1787 / 2291 / W</strain>
    </source>
</reference>
<comment type="catalytic activity">
    <reaction evidence="1">
        <text>2-formamido-N(1)-(5-O-phospho-beta-D-ribosyl)acetamidine + ATP = 5-amino-1-(5-phospho-beta-D-ribosyl)imidazole + ADP + phosphate + H(+)</text>
        <dbReference type="Rhea" id="RHEA:23032"/>
        <dbReference type="ChEBI" id="CHEBI:15378"/>
        <dbReference type="ChEBI" id="CHEBI:30616"/>
        <dbReference type="ChEBI" id="CHEBI:43474"/>
        <dbReference type="ChEBI" id="CHEBI:137981"/>
        <dbReference type="ChEBI" id="CHEBI:147287"/>
        <dbReference type="ChEBI" id="CHEBI:456216"/>
        <dbReference type="EC" id="6.3.3.1"/>
    </reaction>
</comment>
<comment type="pathway">
    <text evidence="1">Purine metabolism; IMP biosynthesis via de novo pathway; 5-amino-1-(5-phospho-D-ribosyl)imidazole from N(2)-formyl-N(1)-(5-phospho-D-ribosyl)glycinamide: step 2/2.</text>
</comment>
<comment type="subcellular location">
    <subcellularLocation>
        <location evidence="1">Cytoplasm</location>
    </subcellularLocation>
</comment>
<comment type="similarity">
    <text evidence="1">Belongs to the AIR synthase family.</text>
</comment>
<sequence>MVTYKDSGVNIEEGYKSVKLMKDYASKTFIPGVINNLGSFAGMFEIGSGYKNPVLVSGTDGVGTKLAVAFATKKYDTVGIDCTAMCVNDILCHGAKPVFFLDYIACGKLEAEVASDLVKGVSEGCSQAGCALIGGETAEMPGFYKEGEYDLAGFAVGLVDKDKIIDGSKIEDGNVLIGIASSGIHSNGYSLVRKLITDFNEEFNGKKIGEVLLTPTKIYVKPVLKVLESFDVKGMAHITGGGFYENIPRMFKGDFTAVINKESLEIPEIFKHIMSLGVDENHAFNTFNMGIGFVICAAKEDKDGIIASLKESGEKAYEIGYVKAGGSGVCIK</sequence>
<feature type="chain" id="PRO_0000148205" description="Phosphoribosylformylglycinamidine cyclo-ligase">
    <location>
        <begin position="1"/>
        <end position="332"/>
    </location>
</feature>
<accession>Q97J93</accession>
<proteinExistence type="inferred from homology"/>
<name>PUR5_CLOAB</name>
<evidence type="ECO:0000255" key="1">
    <source>
        <dbReference type="HAMAP-Rule" id="MF_00741"/>
    </source>
</evidence>
<dbReference type="EC" id="6.3.3.1" evidence="1"/>
<dbReference type="EMBL" id="AE001437">
    <property type="protein sequence ID" value="AAK79361.1"/>
    <property type="molecule type" value="Genomic_DNA"/>
</dbReference>
<dbReference type="PIR" id="F97071">
    <property type="entry name" value="F97071"/>
</dbReference>
<dbReference type="RefSeq" id="NP_348021.1">
    <property type="nucleotide sequence ID" value="NC_003030.1"/>
</dbReference>
<dbReference type="RefSeq" id="WP_010964702.1">
    <property type="nucleotide sequence ID" value="NC_003030.1"/>
</dbReference>
<dbReference type="SMR" id="Q97J93"/>
<dbReference type="STRING" id="272562.CA_C1393"/>
<dbReference type="GeneID" id="44997899"/>
<dbReference type="KEGG" id="cac:CA_C1393"/>
<dbReference type="PATRIC" id="fig|272562.8.peg.1599"/>
<dbReference type="eggNOG" id="COG0150">
    <property type="taxonomic scope" value="Bacteria"/>
</dbReference>
<dbReference type="HOGENOM" id="CLU_047116_0_0_9"/>
<dbReference type="OrthoDB" id="9802507at2"/>
<dbReference type="UniPathway" id="UPA00074">
    <property type="reaction ID" value="UER00129"/>
</dbReference>
<dbReference type="Proteomes" id="UP000000814">
    <property type="component" value="Chromosome"/>
</dbReference>
<dbReference type="GO" id="GO:0005829">
    <property type="term" value="C:cytosol"/>
    <property type="evidence" value="ECO:0007669"/>
    <property type="project" value="TreeGrafter"/>
</dbReference>
<dbReference type="GO" id="GO:0005524">
    <property type="term" value="F:ATP binding"/>
    <property type="evidence" value="ECO:0007669"/>
    <property type="project" value="UniProtKB-KW"/>
</dbReference>
<dbReference type="GO" id="GO:0004637">
    <property type="term" value="F:phosphoribosylamine-glycine ligase activity"/>
    <property type="evidence" value="ECO:0007669"/>
    <property type="project" value="TreeGrafter"/>
</dbReference>
<dbReference type="GO" id="GO:0004641">
    <property type="term" value="F:phosphoribosylformylglycinamidine cyclo-ligase activity"/>
    <property type="evidence" value="ECO:0007669"/>
    <property type="project" value="UniProtKB-UniRule"/>
</dbReference>
<dbReference type="GO" id="GO:0006189">
    <property type="term" value="P:'de novo' IMP biosynthetic process"/>
    <property type="evidence" value="ECO:0007669"/>
    <property type="project" value="UniProtKB-UniRule"/>
</dbReference>
<dbReference type="GO" id="GO:0046084">
    <property type="term" value="P:adenine biosynthetic process"/>
    <property type="evidence" value="ECO:0007669"/>
    <property type="project" value="TreeGrafter"/>
</dbReference>
<dbReference type="CDD" id="cd02196">
    <property type="entry name" value="PurM"/>
    <property type="match status" value="1"/>
</dbReference>
<dbReference type="FunFam" id="3.30.1330.10:FF:000001">
    <property type="entry name" value="Phosphoribosylformylglycinamidine cyclo-ligase"/>
    <property type="match status" value="1"/>
</dbReference>
<dbReference type="FunFam" id="3.90.650.10:FF:000011">
    <property type="entry name" value="Phosphoribosylformylglycinamidine cyclo-ligase"/>
    <property type="match status" value="1"/>
</dbReference>
<dbReference type="Gene3D" id="3.90.650.10">
    <property type="entry name" value="PurM-like C-terminal domain"/>
    <property type="match status" value="1"/>
</dbReference>
<dbReference type="Gene3D" id="3.30.1330.10">
    <property type="entry name" value="PurM-like, N-terminal domain"/>
    <property type="match status" value="1"/>
</dbReference>
<dbReference type="HAMAP" id="MF_00741">
    <property type="entry name" value="AIRS"/>
    <property type="match status" value="1"/>
</dbReference>
<dbReference type="InterPro" id="IPR010918">
    <property type="entry name" value="PurM-like_C_dom"/>
</dbReference>
<dbReference type="InterPro" id="IPR036676">
    <property type="entry name" value="PurM-like_C_sf"/>
</dbReference>
<dbReference type="InterPro" id="IPR016188">
    <property type="entry name" value="PurM-like_N"/>
</dbReference>
<dbReference type="InterPro" id="IPR036921">
    <property type="entry name" value="PurM-like_N_sf"/>
</dbReference>
<dbReference type="InterPro" id="IPR004733">
    <property type="entry name" value="PurM_cligase"/>
</dbReference>
<dbReference type="NCBIfam" id="TIGR00878">
    <property type="entry name" value="purM"/>
    <property type="match status" value="1"/>
</dbReference>
<dbReference type="PANTHER" id="PTHR10520:SF12">
    <property type="entry name" value="TRIFUNCTIONAL PURINE BIOSYNTHETIC PROTEIN ADENOSINE-3"/>
    <property type="match status" value="1"/>
</dbReference>
<dbReference type="PANTHER" id="PTHR10520">
    <property type="entry name" value="TRIFUNCTIONAL PURINE BIOSYNTHETIC PROTEIN ADENOSINE-3-RELATED"/>
    <property type="match status" value="1"/>
</dbReference>
<dbReference type="Pfam" id="PF00586">
    <property type="entry name" value="AIRS"/>
    <property type="match status" value="1"/>
</dbReference>
<dbReference type="Pfam" id="PF02769">
    <property type="entry name" value="AIRS_C"/>
    <property type="match status" value="1"/>
</dbReference>
<dbReference type="SUPFAM" id="SSF56042">
    <property type="entry name" value="PurM C-terminal domain-like"/>
    <property type="match status" value="1"/>
</dbReference>
<dbReference type="SUPFAM" id="SSF55326">
    <property type="entry name" value="PurM N-terminal domain-like"/>
    <property type="match status" value="1"/>
</dbReference>
<gene>
    <name evidence="1" type="primary">purM</name>
    <name type="ordered locus">CA_C1393</name>
</gene>
<protein>
    <recommendedName>
        <fullName evidence="1">Phosphoribosylformylglycinamidine cyclo-ligase</fullName>
        <ecNumber evidence="1">6.3.3.1</ecNumber>
    </recommendedName>
    <alternativeName>
        <fullName evidence="1">AIR synthase</fullName>
    </alternativeName>
    <alternativeName>
        <fullName evidence="1">AIRS</fullName>
    </alternativeName>
    <alternativeName>
        <fullName evidence="1">Phosphoribosyl-aminoimidazole synthetase</fullName>
    </alternativeName>
</protein>